<sequence>MPIKLNASFSDSYVDVSQYRDQHFKGNRYEQEKLLKQSNTLYVGNLSFYTTEEQVYELFSKSGDVKRIIIGLDKVKKTACGFCFVEYYTRADAENAMRFVNGTRLDDRIIRTDWDAGFKEGRQYGRGKSGGQVRDEYRQDYDPARGGYGKVVARP</sequence>
<keyword id="KW-0963">Cytoplasm</keyword>
<keyword id="KW-0507">mRNA processing</keyword>
<keyword id="KW-0508">mRNA splicing</keyword>
<keyword id="KW-0509">mRNA transport</keyword>
<keyword id="KW-0866">Nonsense-mediated mRNA decay</keyword>
<keyword id="KW-0539">Nucleus</keyword>
<keyword id="KW-1185">Reference proteome</keyword>
<keyword id="KW-0694">RNA-binding</keyword>
<keyword id="KW-0943">RNA-mediated gene silencing</keyword>
<keyword id="KW-0810">Translation regulation</keyword>
<keyword id="KW-0813">Transport</keyword>
<comment type="function">
    <text evidence="2">Component of the cap-binding complex (CBC), which binds co-transcriptionally to the 5' cap of pre-mRNAs and is involved in various processes such as pre-mRNA splicing, translation regulation, nonsense-mediated mRNA decay, RNA-mediated gene silencing (RNAi) by microRNAs (miRNAs) and mRNA export. The CBC complex is involved in mRNA export from the nucleus, leading to the recruitment of the mRNA export machinery to the 5' end of mRNA and to mRNA export in a 5' to 3' direction through the nuclear pore. The CBC complex is also involved in mediating U snRNA and intronless mRNAs export from the nucleus. The CBC complex is essential for a pioneer round of mRNA translation, before steady state translation when the CBC complex is replaced by cytoplasmic cap-binding protein eIF4E. The pioneer round of mRNA translation mediated by the CBC complex plays a central role in nonsense-mediated mRNA decay (NMD), NMD only taking place in mRNAs bound to the CBC complex, but not on eIF4E-bound mRNAs. The CBC complex enhances NMD in mRNAs containing at least one exon-junction complex (EJC), promoting the interaction between upf1 and upf2. The CBC complex is also involved in 'failsafe' NMD, which is independent of the EJC complex, while it does not participate in Staufen-mediated mRNA decay (SMD). During cell proliferation, the CBC complex is also involved in microRNAs (miRNAs) biogenesis via its interaction with srrt/ars2, thereby being required for miRNA-mediated RNA interference. The CBC complex also acts as a negative regulator of parn, thereby acting as an inhibitor of mRNA deadenylation. In the CBC complex, ncbp2/cbp20 recognizes and binds capped RNAs (m7GpppG-capped RNA) but requires ncbp1/cbp80 to stabilize the movement of its N-terminal loop and lock the CBC into a high affinity cap-binding state with the cap structure. The conventional cap-binding complex with NCBP2 binds both small nuclear RNA (snRNA) and messenger (mRNA) and is involved in their export from the nucleus (By similarity).</text>
</comment>
<comment type="subunit">
    <text evidence="2">Component of the nuclear cap-binding complex (CBC), a heterodimer composed of ncbp1/cbp80 and ncbp2/cbp20 that interacts with m7GpppG-capped RNA.</text>
</comment>
<comment type="subcellular location">
    <subcellularLocation>
        <location evidence="2">Nucleus</location>
    </subcellularLocation>
    <subcellularLocation>
        <location evidence="2">Cytoplasm</location>
    </subcellularLocation>
</comment>
<comment type="similarity">
    <text evidence="5">Belongs to the RRM NCBP2 family.</text>
</comment>
<accession>C1BY64</accession>
<feature type="chain" id="PRO_0000385252" description="Nuclear cap-binding protein subunit 2">
    <location>
        <begin position="1"/>
        <end position="155"/>
    </location>
</feature>
<feature type="domain" description="RRM" evidence="3">
    <location>
        <begin position="39"/>
        <end position="117"/>
    </location>
</feature>
<feature type="region of interest" description="Disordered" evidence="4">
    <location>
        <begin position="122"/>
        <end position="155"/>
    </location>
</feature>
<feature type="compositionally biased region" description="Basic and acidic residues" evidence="4">
    <location>
        <begin position="133"/>
        <end position="143"/>
    </location>
</feature>
<feature type="binding site" evidence="1">
    <location>
        <position position="19"/>
    </location>
    <ligand>
        <name>mRNA</name>
        <dbReference type="ChEBI" id="CHEBI:33699"/>
    </ligand>
    <ligandPart>
        <name>mRNA cap</name>
    </ligandPart>
</feature>
<feature type="binding site" evidence="1">
    <location>
        <position position="42"/>
    </location>
    <ligand>
        <name>mRNA</name>
        <dbReference type="ChEBI" id="CHEBI:33699"/>
    </ligand>
    <ligandPart>
        <name>mRNA cap</name>
    </ligandPart>
</feature>
<feature type="binding site" evidence="1">
    <location>
        <begin position="111"/>
        <end position="115"/>
    </location>
    <ligand>
        <name>mRNA</name>
        <dbReference type="ChEBI" id="CHEBI:33699"/>
    </ligand>
    <ligandPart>
        <name>mRNA cap</name>
    </ligandPart>
</feature>
<feature type="binding site" evidence="1">
    <location>
        <begin position="122"/>
        <end position="126"/>
    </location>
    <ligand>
        <name>mRNA</name>
        <dbReference type="ChEBI" id="CHEBI:33699"/>
    </ligand>
    <ligandPart>
        <name>mRNA cap</name>
    </ligandPart>
</feature>
<feature type="binding site" evidence="1">
    <location>
        <begin position="132"/>
        <end position="133"/>
    </location>
    <ligand>
        <name>mRNA</name>
        <dbReference type="ChEBI" id="CHEBI:33699"/>
    </ligand>
    <ligandPart>
        <name>mRNA cap</name>
    </ligandPart>
</feature>
<proteinExistence type="evidence at transcript level"/>
<evidence type="ECO:0000250" key="1"/>
<evidence type="ECO:0000250" key="2">
    <source>
        <dbReference type="UniProtKB" id="P52298"/>
    </source>
</evidence>
<evidence type="ECO:0000255" key="3">
    <source>
        <dbReference type="PROSITE-ProRule" id="PRU00176"/>
    </source>
</evidence>
<evidence type="ECO:0000256" key="4">
    <source>
        <dbReference type="SAM" id="MobiDB-lite"/>
    </source>
</evidence>
<evidence type="ECO:0000305" key="5"/>
<gene>
    <name type="primary">ncbp2</name>
    <name type="synonym">cbp20</name>
</gene>
<name>NCBP2_ESOLU</name>
<organism>
    <name type="scientific">Esox lucius</name>
    <name type="common">Northern pike</name>
    <dbReference type="NCBI Taxonomy" id="8010"/>
    <lineage>
        <taxon>Eukaryota</taxon>
        <taxon>Metazoa</taxon>
        <taxon>Chordata</taxon>
        <taxon>Craniata</taxon>
        <taxon>Vertebrata</taxon>
        <taxon>Euteleostomi</taxon>
        <taxon>Actinopterygii</taxon>
        <taxon>Neopterygii</taxon>
        <taxon>Teleostei</taxon>
        <taxon>Protacanthopterygii</taxon>
        <taxon>Esociformes</taxon>
        <taxon>Esocidae</taxon>
        <taxon>Esox</taxon>
    </lineage>
</organism>
<protein>
    <recommendedName>
        <fullName>Nuclear cap-binding protein subunit 2</fullName>
    </recommendedName>
    <alternativeName>
        <fullName>20 kDa nuclear cap-binding protein</fullName>
    </alternativeName>
    <alternativeName>
        <fullName>NCBP 20 kDa subunit</fullName>
        <shortName>CBP20</shortName>
    </alternativeName>
</protein>
<dbReference type="EMBL" id="BT079543">
    <property type="protein sequence ID" value="ACO13967.1"/>
    <property type="molecule type" value="mRNA"/>
</dbReference>
<dbReference type="RefSeq" id="NP_001290613.1">
    <property type="nucleotide sequence ID" value="NM_001303684.1"/>
</dbReference>
<dbReference type="SMR" id="C1BY64"/>
<dbReference type="FunCoup" id="C1BY64">
    <property type="interactions" value="1642"/>
</dbReference>
<dbReference type="STRING" id="8010.ENSELUP00000019596"/>
<dbReference type="GeneID" id="105011987"/>
<dbReference type="KEGG" id="els:105011987"/>
<dbReference type="CTD" id="22916"/>
<dbReference type="InParanoid" id="C1BY64"/>
<dbReference type="OrthoDB" id="201398at2759"/>
<dbReference type="Proteomes" id="UP000265140">
    <property type="component" value="Unassembled WGS sequence"/>
</dbReference>
<dbReference type="GO" id="GO:0005737">
    <property type="term" value="C:cytoplasm"/>
    <property type="evidence" value="ECO:0007669"/>
    <property type="project" value="UniProtKB-SubCell"/>
</dbReference>
<dbReference type="GO" id="GO:0005846">
    <property type="term" value="C:nuclear cap binding complex"/>
    <property type="evidence" value="ECO:0007669"/>
    <property type="project" value="InterPro"/>
</dbReference>
<dbReference type="GO" id="GO:0005634">
    <property type="term" value="C:nucleus"/>
    <property type="evidence" value="ECO:0007669"/>
    <property type="project" value="UniProtKB-SubCell"/>
</dbReference>
<dbReference type="GO" id="GO:0003729">
    <property type="term" value="F:mRNA binding"/>
    <property type="evidence" value="ECO:0000250"/>
    <property type="project" value="UniProtKB"/>
</dbReference>
<dbReference type="GO" id="GO:0000340">
    <property type="term" value="F:RNA 7-methylguanosine cap binding"/>
    <property type="evidence" value="ECO:0000250"/>
    <property type="project" value="UniProtKB"/>
</dbReference>
<dbReference type="GO" id="GO:0017069">
    <property type="term" value="F:snRNA binding"/>
    <property type="evidence" value="ECO:0000250"/>
    <property type="project" value="UniProtKB"/>
</dbReference>
<dbReference type="GO" id="GO:0045292">
    <property type="term" value="P:mRNA cis splicing, via spliceosome"/>
    <property type="evidence" value="ECO:0000250"/>
    <property type="project" value="UniProtKB"/>
</dbReference>
<dbReference type="GO" id="GO:0051028">
    <property type="term" value="P:mRNA transport"/>
    <property type="evidence" value="ECO:0007669"/>
    <property type="project" value="UniProtKB-KW"/>
</dbReference>
<dbReference type="GO" id="GO:0000184">
    <property type="term" value="P:nuclear-transcribed mRNA catabolic process, nonsense-mediated decay"/>
    <property type="evidence" value="ECO:0007669"/>
    <property type="project" value="UniProtKB-KW"/>
</dbReference>
<dbReference type="GO" id="GO:0046833">
    <property type="term" value="P:positive regulation of RNA export from nucleus"/>
    <property type="evidence" value="ECO:0000250"/>
    <property type="project" value="UniProtKB"/>
</dbReference>
<dbReference type="GO" id="GO:0006417">
    <property type="term" value="P:regulation of translation"/>
    <property type="evidence" value="ECO:0007669"/>
    <property type="project" value="UniProtKB-KW"/>
</dbReference>
<dbReference type="GO" id="GO:0031047">
    <property type="term" value="P:regulatory ncRNA-mediated gene silencing"/>
    <property type="evidence" value="ECO:0007669"/>
    <property type="project" value="UniProtKB-KW"/>
</dbReference>
<dbReference type="GO" id="GO:0008380">
    <property type="term" value="P:RNA splicing"/>
    <property type="evidence" value="ECO:0000250"/>
    <property type="project" value="UniProtKB"/>
</dbReference>
<dbReference type="GO" id="GO:0006408">
    <property type="term" value="P:snRNA export from nucleus"/>
    <property type="evidence" value="ECO:0000250"/>
    <property type="project" value="UniProtKB"/>
</dbReference>
<dbReference type="CDD" id="cd12240">
    <property type="entry name" value="RRM_NCBP2"/>
    <property type="match status" value="1"/>
</dbReference>
<dbReference type="FunFam" id="3.30.70.330:FF:000128">
    <property type="entry name" value="Nuclear cap-binding protein subunit 2"/>
    <property type="match status" value="1"/>
</dbReference>
<dbReference type="Gene3D" id="3.30.70.330">
    <property type="match status" value="1"/>
</dbReference>
<dbReference type="InterPro" id="IPR027157">
    <property type="entry name" value="NCBP2"/>
</dbReference>
<dbReference type="InterPro" id="IPR034148">
    <property type="entry name" value="NCBP2_RRM"/>
</dbReference>
<dbReference type="InterPro" id="IPR012677">
    <property type="entry name" value="Nucleotide-bd_a/b_plait_sf"/>
</dbReference>
<dbReference type="InterPro" id="IPR035979">
    <property type="entry name" value="RBD_domain_sf"/>
</dbReference>
<dbReference type="InterPro" id="IPR000504">
    <property type="entry name" value="RRM_dom"/>
</dbReference>
<dbReference type="PANTHER" id="PTHR18847">
    <property type="entry name" value="20 KD NUCLEAR CAP BINDING PROTEIN"/>
    <property type="match status" value="1"/>
</dbReference>
<dbReference type="PANTHER" id="PTHR18847:SF0">
    <property type="entry name" value="NUCLEAR CAP-BINDING PROTEIN SUBUNIT 2"/>
    <property type="match status" value="1"/>
</dbReference>
<dbReference type="Pfam" id="PF00076">
    <property type="entry name" value="RRM_1"/>
    <property type="match status" value="1"/>
</dbReference>
<dbReference type="SMART" id="SM00360">
    <property type="entry name" value="RRM"/>
    <property type="match status" value="1"/>
</dbReference>
<dbReference type="SUPFAM" id="SSF54928">
    <property type="entry name" value="RNA-binding domain, RBD"/>
    <property type="match status" value="1"/>
</dbReference>
<dbReference type="PROSITE" id="PS50102">
    <property type="entry name" value="RRM"/>
    <property type="match status" value="1"/>
</dbReference>
<reference key="1">
    <citation type="journal article" date="2010" name="BMC Genomics">
        <title>Salmo salar and Esox lucius full-length cDNA sequences reveal changes in evolutionary pressures on a post-tetraploidization genome.</title>
        <authorList>
            <person name="Leong J.S."/>
            <person name="Jantzen S.G."/>
            <person name="von Schalburg K.R."/>
            <person name="Cooper G.A."/>
            <person name="Messmer A.M."/>
            <person name="Liao N.Y."/>
            <person name="Munro S."/>
            <person name="Moore R."/>
            <person name="Holt R.A."/>
            <person name="Jones S.J."/>
            <person name="Davidson W.S."/>
            <person name="Koop B.F."/>
        </authorList>
    </citation>
    <scope>NUCLEOTIDE SEQUENCE [LARGE SCALE MRNA]</scope>
    <source>
        <tissue>Kidney</tissue>
    </source>
</reference>